<reference key="1">
    <citation type="journal article" date="2004" name="Plasmid">
        <title>Structural comparison of the integrative and conjugative elements R391, pMERPH, R997, and SXT.</title>
        <authorList>
            <person name="Boeltner D."/>
            <person name="Osborn A.M."/>
        </authorList>
    </citation>
    <scope>NUCLEOTIDE SEQUENCE [GENOMIC DNA]</scope>
</reference>
<dbReference type="EMBL" id="AY157600">
    <property type="protein sequence ID" value="AAN60107.1"/>
    <property type="molecule type" value="Genomic_DNA"/>
</dbReference>
<dbReference type="SMR" id="Q8GJK1"/>
<dbReference type="MEROPS" id="S24.002"/>
<dbReference type="GO" id="GO:0003677">
    <property type="term" value="F:DNA binding"/>
    <property type="evidence" value="ECO:0007669"/>
    <property type="project" value="UniProtKB-KW"/>
</dbReference>
<dbReference type="CDD" id="cd00093">
    <property type="entry name" value="HTH_XRE"/>
    <property type="match status" value="1"/>
</dbReference>
<dbReference type="CDD" id="cd06529">
    <property type="entry name" value="S24_LexA-like"/>
    <property type="match status" value="1"/>
</dbReference>
<dbReference type="Gene3D" id="1.10.260.40">
    <property type="entry name" value="lambda repressor-like DNA-binding domains"/>
    <property type="match status" value="1"/>
</dbReference>
<dbReference type="Gene3D" id="2.10.109.10">
    <property type="entry name" value="Umud Fragment, subunit A"/>
    <property type="match status" value="1"/>
</dbReference>
<dbReference type="InterPro" id="IPR001387">
    <property type="entry name" value="Cro/C1-type_HTH"/>
</dbReference>
<dbReference type="InterPro" id="IPR010982">
    <property type="entry name" value="Lambda_DNA-bd_dom_sf"/>
</dbReference>
<dbReference type="InterPro" id="IPR039418">
    <property type="entry name" value="LexA-like"/>
</dbReference>
<dbReference type="InterPro" id="IPR036286">
    <property type="entry name" value="LexA/Signal_pep-like_sf"/>
</dbReference>
<dbReference type="InterPro" id="IPR050077">
    <property type="entry name" value="LexA_repressor"/>
</dbReference>
<dbReference type="InterPro" id="IPR015927">
    <property type="entry name" value="Peptidase_S24_S26A/B/C"/>
</dbReference>
<dbReference type="PANTHER" id="PTHR33516">
    <property type="entry name" value="LEXA REPRESSOR"/>
    <property type="match status" value="1"/>
</dbReference>
<dbReference type="PANTHER" id="PTHR33516:SF2">
    <property type="entry name" value="LEXA REPRESSOR-RELATED"/>
    <property type="match status" value="1"/>
</dbReference>
<dbReference type="Pfam" id="PF01381">
    <property type="entry name" value="HTH_3"/>
    <property type="match status" value="1"/>
</dbReference>
<dbReference type="Pfam" id="PF00717">
    <property type="entry name" value="Peptidase_S24"/>
    <property type="match status" value="1"/>
</dbReference>
<dbReference type="SMART" id="SM00530">
    <property type="entry name" value="HTH_XRE"/>
    <property type="match status" value="1"/>
</dbReference>
<dbReference type="SUPFAM" id="SSF47413">
    <property type="entry name" value="lambda repressor-like DNA-binding domains"/>
    <property type="match status" value="1"/>
</dbReference>
<dbReference type="SUPFAM" id="SSF51306">
    <property type="entry name" value="LexA/Signal peptidase"/>
    <property type="match status" value="1"/>
</dbReference>
<dbReference type="PROSITE" id="PS50943">
    <property type="entry name" value="HTH_CROC1"/>
    <property type="match status" value="1"/>
</dbReference>
<organism>
    <name type="scientific">Shewanella putrefaciens</name>
    <name type="common">Pseudomonas putrefaciens</name>
    <dbReference type="NCBI Taxonomy" id="24"/>
    <lineage>
        <taxon>Bacteria</taxon>
        <taxon>Pseudomonadati</taxon>
        <taxon>Pseudomonadota</taxon>
        <taxon>Gammaproteobacteria</taxon>
        <taxon>Alteromonadales</taxon>
        <taxon>Shewanellaceae</taxon>
        <taxon>Shewanella</taxon>
    </lineage>
</organism>
<proteinExistence type="predicted"/>
<protein>
    <recommendedName>
        <fullName>HTH-type transcriptional regulator for conjugative element pMERPH</fullName>
    </recommendedName>
</protein>
<comment type="function">
    <text>May control the expression of the integrase and inhibit excision of the mobile element pMERPH, and regulate the expression of other genes as well.</text>
</comment>
<keyword id="KW-0238">DNA-binding</keyword>
<keyword id="KW-0678">Repressor</keyword>
<keyword id="KW-0804">Transcription</keyword>
<keyword id="KW-0805">Transcription regulation</keyword>
<accession>Q8GJK1</accession>
<name>TRME_SHEPU</name>
<sequence>MKTLSERLNHALQLTGVTQSELARRIGIKQQSISQICSGKSARSRYTMQIAEALRVNAHWLATGDGEIGLGVGNVEVGPDIKGRIPLINWVQAGDWTEIAEGFAHEDAEEWREVTGKAHEGCFALRVKGDSMENPSGKKSIPEGAVIVVDPELPYSSGSLVVARLDDSKEATFKQLVIDGEQKYLKPLNPQYPAIPINGNCTIIGVVRQAIIDFW</sequence>
<evidence type="ECO:0000255" key="1">
    <source>
        <dbReference type="PROSITE-ProRule" id="PRU00257"/>
    </source>
</evidence>
<feature type="chain" id="PRO_0000149740" description="HTH-type transcriptional regulator for conjugative element pMERPH">
    <location>
        <begin position="1"/>
        <end position="215"/>
    </location>
</feature>
<feature type="domain" description="HTH cro/C1-type" evidence="1">
    <location>
        <begin position="8"/>
        <end position="61"/>
    </location>
</feature>
<feature type="DNA-binding region" description="H-T-H motif" evidence="1">
    <location>
        <begin position="19"/>
        <end position="38"/>
    </location>
</feature>